<keyword id="KW-0256">Endoplasmic reticulum</keyword>
<keyword id="KW-0444">Lipid biosynthesis</keyword>
<keyword id="KW-0443">Lipid metabolism</keyword>
<keyword id="KW-0472">Membrane</keyword>
<keyword id="KW-0521">NADP</keyword>
<keyword id="KW-0560">Oxidoreductase</keyword>
<keyword id="KW-0752">Steroid biosynthesis</keyword>
<keyword id="KW-0753">Steroid metabolism</keyword>
<keyword id="KW-0756">Sterol biosynthesis</keyword>
<keyword id="KW-1207">Sterol metabolism</keyword>
<keyword id="KW-0812">Transmembrane</keyword>
<keyword id="KW-1133">Transmembrane helix</keyword>
<feature type="chain" id="PRO_0000114452" description="3-hydroxy-3-methylglutaryl-coenzyme A reductase">
    <location>
        <begin position="1"/>
        <end position="976"/>
    </location>
</feature>
<feature type="topological domain" description="Lumenal" evidence="2">
    <location>
        <begin position="1"/>
        <end position="36"/>
    </location>
</feature>
<feature type="transmembrane region" description="Helical" evidence="4">
    <location>
        <begin position="37"/>
        <end position="57"/>
    </location>
</feature>
<feature type="topological domain" description="Cytoplasmic" evidence="2">
    <location>
        <begin position="58"/>
        <end position="64"/>
    </location>
</feature>
<feature type="transmembrane region" description="Helical" evidence="4">
    <location>
        <begin position="65"/>
        <end position="85"/>
    </location>
</feature>
<feature type="topological domain" description="Lumenal" evidence="2">
    <location>
        <begin position="86"/>
        <end position="90"/>
    </location>
</feature>
<feature type="transmembrane region" description="Helical" evidence="4">
    <location>
        <begin position="91"/>
        <end position="111"/>
    </location>
</feature>
<feature type="topological domain" description="Cytoplasmic" evidence="2">
    <location>
        <begin position="112"/>
        <end position="169"/>
    </location>
</feature>
<feature type="transmembrane region" description="Helical" evidence="4">
    <location>
        <begin position="170"/>
        <end position="190"/>
    </location>
</feature>
<feature type="topological domain" description="Lumenal" evidence="2">
    <location>
        <begin position="191"/>
        <end position="193"/>
    </location>
</feature>
<feature type="transmembrane region" description="Helical" evidence="4">
    <location>
        <begin position="194"/>
        <end position="214"/>
    </location>
</feature>
<feature type="topological domain" description="Cytoplasmic" evidence="2">
    <location>
        <begin position="215"/>
        <end position="272"/>
    </location>
</feature>
<feature type="transmembrane region" description="Helical" evidence="4">
    <location>
        <begin position="273"/>
        <end position="293"/>
    </location>
</feature>
<feature type="topological domain" description="Lumenal" evidence="2">
    <location>
        <begin position="294"/>
        <end position="401"/>
    </location>
</feature>
<feature type="transmembrane region" description="Helical" evidence="4">
    <location>
        <begin position="402"/>
        <end position="422"/>
    </location>
</feature>
<feature type="topological domain" description="Cytoplasmic" evidence="2">
    <location>
        <begin position="423"/>
        <end position="976"/>
    </location>
</feature>
<feature type="domain" description="SSD" evidence="5">
    <location>
        <begin position="36"/>
        <end position="217"/>
    </location>
</feature>
<feature type="region of interest" description="Disordered" evidence="7">
    <location>
        <begin position="926"/>
        <end position="954"/>
    </location>
</feature>
<feature type="compositionally biased region" description="Polar residues" evidence="7">
    <location>
        <begin position="928"/>
        <end position="941"/>
    </location>
</feature>
<feature type="compositionally biased region" description="Basic and acidic residues" evidence="7">
    <location>
        <begin position="943"/>
        <end position="953"/>
    </location>
</feature>
<feature type="active site" description="Charge relay system" evidence="1">
    <location>
        <position position="618"/>
    </location>
</feature>
<feature type="active site" description="Charge relay system" evidence="1">
    <location>
        <position position="752"/>
    </location>
</feature>
<feature type="active site" description="Charge relay system" evidence="1">
    <location>
        <position position="828"/>
    </location>
</feature>
<feature type="active site" description="Proton donor" evidence="6">
    <location>
        <position position="924"/>
    </location>
</feature>
<feature type="binding site" evidence="1">
    <location>
        <begin position="624"/>
        <end position="630"/>
    </location>
    <ligand>
        <name>CoA</name>
        <dbReference type="ChEBI" id="CHEBI:57287"/>
    </ligand>
</feature>
<feature type="binding site" evidence="1">
    <location>
        <begin position="685"/>
        <end position="687"/>
    </location>
    <ligand>
        <name>NADP(+)</name>
        <dbReference type="ChEBI" id="CHEBI:58349"/>
    </ligand>
</feature>
<feature type="binding site" evidence="1">
    <location>
        <begin position="712"/>
        <end position="720"/>
    </location>
    <ligand>
        <name>NADP(+)</name>
        <dbReference type="ChEBI" id="CHEBI:58349"/>
    </ligand>
</feature>
<feature type="binding site" evidence="1">
    <location>
        <begin position="781"/>
        <end position="783"/>
    </location>
    <ligand>
        <name>CoA</name>
        <dbReference type="ChEBI" id="CHEBI:57287"/>
    </ligand>
</feature>
<feature type="binding site" evidence="1">
    <location>
        <begin position="923"/>
        <end position="924"/>
    </location>
    <ligand>
        <name>CoA</name>
        <dbReference type="ChEBI" id="CHEBI:57287"/>
    </ligand>
</feature>
<feature type="binding site" evidence="1">
    <location>
        <begin position="928"/>
        <end position="929"/>
    </location>
    <ligand>
        <name>NADP(+)</name>
        <dbReference type="ChEBI" id="CHEBI:58349"/>
    </ligand>
</feature>
<sequence>MDHEGCQGQHPQQCCQWVSNAWSEFLDLLKNAETLDIVIMLLGYIAMHLTFVSLFLSMRKMGSKFWLGICTLFSSVFAFLFGLVVTTKLGVPISVILLSEGLPFLVVTIGFEKNIVLTRAVMSHAIEHRRIQAQNSKSGKRSPDGSTQNMIQYAVQAAIKEKGFEIIRDYAIEIVILVIGAASGVQGGLQQFCFLAAWTLFFDFILLFTFYTAILSIKLRSTVSSVMSICVWPLRMMASRRVAENVAKGDDELNRVRGDAPLFGRKSSSIPKFKVLMILGFIFVNIVNICSIPFRNPSSMSTIRTWASSLGGVIAPLSVDPFKVASNGLDAILPTAKSNNRPTLVTVLTPIKYELEYPSIHYALGSAASNPAYNDAFHHHFQGYGVGGRMVGGILKSLEDPVLSKWIVIALALSVALNGYLFNVARWGIKDPNVPEHNIDRNELARAREFNDTGSATLPLGEYVPPTPMRTQPSTPAITDDEAEGLHMTKARPANLPNRSNEELEKLLSENALREMTDEEVISLSMRGKIPGYALEKTLGDFTRAVKIRRSIIARNKAAADITHSLDRSKLPYENYNWERFFGACCENVIGYMPLPVGVAGPLVIDGQSYFIPMATTEGVLVASASRGCKAINSGGGAITVLTADGMTRGPCVAFETLERAGAAKLWLDSEAGQDMMKKAFNSTSRFARLQSMKTALAGTNLYIRFKTTTGDAMGMNMISKGVEHALSVMANDGGFDDMQIISVSGNYCTDKKAAALNWIDGRGKGVVAEAIIPGEVVRSVLKSDVDSLVELNVAKNLIGSAMAGSVGGFNAHAANIVAAIFLATGQDPAQVVESANCITIMKNLNGALQISVSMPSLEVGTLGGGTILEPQGAMLDILGVRGSHPTNPGDNARRLARIIGAAVLAGELSLCSALAAGHLVRAHMQHNRSAAPSRSTTPGSSHDARLTGHDQCPRALSVNNVDERRRYSEVKAIDE</sequence>
<reference key="1">
    <citation type="journal article" date="1997" name="Curr. Genet.">
        <title>3-hydroxy-3-methylglutaryl-CoA reductase gene of Gibberella fujikuroi: isolation and characterization.</title>
        <authorList>
            <person name="Woitek S."/>
            <person name="Unkles S.E."/>
            <person name="Kinghorn J.R."/>
            <person name="Tudzynski B."/>
        </authorList>
    </citation>
    <scope>NUCLEOTIDE SEQUENCE [GENOMIC DNA]</scope>
    <source>
        <strain>m567</strain>
    </source>
</reference>
<gene>
    <name evidence="8" type="primary">HMGR</name>
    <name type="synonym">HMGA</name>
</gene>
<comment type="function">
    <text evidence="3">HMG-CoA reductase; part of the first module of ergosterol biosynthesis pathway that includes the early steps of the pathway, conserved across all eukaryotes, and which results in the formation of mevalonate from acetyl-coenzyme A (acetyl-CoA) (By similarity). In this module, the cytosolic acetyl-CoA acetyltransferase catalyzes the formation of acetoacetyl-CoA (By similarity). The hydroxymethylglutaryl-CoA synthase then condenses acetyl-CoA with acetoacetyl-CoA to form HMG-CoA (By similarity). The rate-limiting step of the early module is the reduction to mevalonate by the 3-hydroxy-3-methylglutaryl-coenzyme A (HMG-CoA) reductase HMGR (By similarity).</text>
</comment>
<comment type="catalytic activity">
    <reaction evidence="6">
        <text>(R)-mevalonate + 2 NADP(+) + CoA = (3S)-3-hydroxy-3-methylglutaryl-CoA + 2 NADPH + 2 H(+)</text>
        <dbReference type="Rhea" id="RHEA:15989"/>
        <dbReference type="ChEBI" id="CHEBI:15378"/>
        <dbReference type="ChEBI" id="CHEBI:36464"/>
        <dbReference type="ChEBI" id="CHEBI:43074"/>
        <dbReference type="ChEBI" id="CHEBI:57287"/>
        <dbReference type="ChEBI" id="CHEBI:57783"/>
        <dbReference type="ChEBI" id="CHEBI:58349"/>
        <dbReference type="EC" id="1.1.1.34"/>
    </reaction>
</comment>
<comment type="pathway">
    <text evidence="3">Metabolic intermediate biosynthesis; (R)-mevalonate biosynthesis; (R)-mevalonate from acetyl-CoA: step 3/3.</text>
</comment>
<comment type="subcellular location">
    <subcellularLocation>
        <location evidence="9">Endoplasmic reticulum membrane</location>
        <topology evidence="4">Multi-pass membrane protein</topology>
    </subcellularLocation>
</comment>
<comment type="similarity">
    <text evidence="9">Belongs to the HMG-CoA reductase family.</text>
</comment>
<dbReference type="EC" id="1.1.1.34" evidence="3"/>
<dbReference type="EMBL" id="X94307">
    <property type="protein sequence ID" value="CAA63970.1"/>
    <property type="molecule type" value="Genomic_DNA"/>
</dbReference>
<dbReference type="SMR" id="P0CT44"/>
<dbReference type="eggNOG" id="KOG2480">
    <property type="taxonomic scope" value="Eukaryota"/>
</dbReference>
<dbReference type="UniPathway" id="UPA00058">
    <property type="reaction ID" value="UER00103"/>
</dbReference>
<dbReference type="GO" id="GO:0005789">
    <property type="term" value="C:endoplasmic reticulum membrane"/>
    <property type="evidence" value="ECO:0007669"/>
    <property type="project" value="UniProtKB-SubCell"/>
</dbReference>
<dbReference type="GO" id="GO:0005778">
    <property type="term" value="C:peroxisomal membrane"/>
    <property type="evidence" value="ECO:0007669"/>
    <property type="project" value="TreeGrafter"/>
</dbReference>
<dbReference type="GO" id="GO:0004420">
    <property type="term" value="F:hydroxymethylglutaryl-CoA reductase (NADPH) activity"/>
    <property type="evidence" value="ECO:0007669"/>
    <property type="project" value="UniProtKB-EC"/>
</dbReference>
<dbReference type="GO" id="GO:0015936">
    <property type="term" value="P:coenzyme A metabolic process"/>
    <property type="evidence" value="ECO:0007669"/>
    <property type="project" value="InterPro"/>
</dbReference>
<dbReference type="GO" id="GO:0006696">
    <property type="term" value="P:ergosterol biosynthetic process"/>
    <property type="evidence" value="ECO:0007669"/>
    <property type="project" value="TreeGrafter"/>
</dbReference>
<dbReference type="GO" id="GO:0008299">
    <property type="term" value="P:isoprenoid biosynthetic process"/>
    <property type="evidence" value="ECO:0007669"/>
    <property type="project" value="InterPro"/>
</dbReference>
<dbReference type="CDD" id="cd00643">
    <property type="entry name" value="HMG-CoA_reductase_classI"/>
    <property type="match status" value="1"/>
</dbReference>
<dbReference type="FunFam" id="1.10.3270.10:FF:000001">
    <property type="entry name" value="3-hydroxy-3-methylglutaryl coenzyme A reductase"/>
    <property type="match status" value="1"/>
</dbReference>
<dbReference type="FunFam" id="3.30.70.420:FF:000001">
    <property type="entry name" value="3-hydroxy-3-methylglutaryl coenzyme A reductase"/>
    <property type="match status" value="1"/>
</dbReference>
<dbReference type="FunFam" id="3.90.770.10:FF:000001">
    <property type="entry name" value="3-hydroxy-3-methylglutaryl coenzyme A reductase"/>
    <property type="match status" value="1"/>
</dbReference>
<dbReference type="Gene3D" id="3.90.770.10">
    <property type="entry name" value="3-hydroxy-3-methylglutaryl-coenzyme A Reductase, Chain A, domain 2"/>
    <property type="match status" value="1"/>
</dbReference>
<dbReference type="Gene3D" id="1.10.3270.10">
    <property type="entry name" value="HMGR, N-terminal domain"/>
    <property type="match status" value="1"/>
</dbReference>
<dbReference type="Gene3D" id="3.30.70.420">
    <property type="entry name" value="Hydroxymethylglutaryl-CoA reductase, class I/II, NAD/NADP-binding domain"/>
    <property type="match status" value="1"/>
</dbReference>
<dbReference type="InterPro" id="IPR002202">
    <property type="entry name" value="HMG_CoA_Rdtase"/>
</dbReference>
<dbReference type="InterPro" id="IPR023074">
    <property type="entry name" value="HMG_CoA_Rdtase_cat_sf"/>
</dbReference>
<dbReference type="InterPro" id="IPR023076">
    <property type="entry name" value="HMG_CoA_Rdtase_CS"/>
</dbReference>
<dbReference type="InterPro" id="IPR004554">
    <property type="entry name" value="HMG_CoA_Rdtase_eu_arc"/>
</dbReference>
<dbReference type="InterPro" id="IPR023282">
    <property type="entry name" value="HMG_CoA_Rdtase_N"/>
</dbReference>
<dbReference type="InterPro" id="IPR009023">
    <property type="entry name" value="HMG_CoA_Rdtase_NAD(P)-bd_sf"/>
</dbReference>
<dbReference type="InterPro" id="IPR009029">
    <property type="entry name" value="HMG_CoA_Rdtase_sub-bd_dom_sf"/>
</dbReference>
<dbReference type="InterPro" id="IPR053958">
    <property type="entry name" value="HMGCR/SNAP/NPC1-like_SSD"/>
</dbReference>
<dbReference type="InterPro" id="IPR000731">
    <property type="entry name" value="SSD"/>
</dbReference>
<dbReference type="NCBIfam" id="TIGR00533">
    <property type="entry name" value="HMG_CoA_R_NADP"/>
    <property type="match status" value="1"/>
</dbReference>
<dbReference type="PANTHER" id="PTHR10572">
    <property type="entry name" value="3-HYDROXY-3-METHYLGLUTARYL-COENZYME A REDUCTASE"/>
    <property type="match status" value="1"/>
</dbReference>
<dbReference type="PANTHER" id="PTHR10572:SF24">
    <property type="entry name" value="3-HYDROXY-3-METHYLGLUTARYL-COENZYME A REDUCTASE"/>
    <property type="match status" value="1"/>
</dbReference>
<dbReference type="Pfam" id="PF00368">
    <property type="entry name" value="HMG-CoA_red"/>
    <property type="match status" value="1"/>
</dbReference>
<dbReference type="Pfam" id="PF12349">
    <property type="entry name" value="Sterol-sensing"/>
    <property type="match status" value="1"/>
</dbReference>
<dbReference type="PRINTS" id="PR00071">
    <property type="entry name" value="HMGCOARDTASE"/>
</dbReference>
<dbReference type="SUPFAM" id="SSF55035">
    <property type="entry name" value="NAD-binding domain of HMG-CoA reductase"/>
    <property type="match status" value="1"/>
</dbReference>
<dbReference type="SUPFAM" id="SSF56542">
    <property type="entry name" value="Substrate-binding domain of HMG-CoA reductase"/>
    <property type="match status" value="1"/>
</dbReference>
<dbReference type="PROSITE" id="PS00066">
    <property type="entry name" value="HMG_COA_REDUCTASE_1"/>
    <property type="match status" value="1"/>
</dbReference>
<dbReference type="PROSITE" id="PS00318">
    <property type="entry name" value="HMG_COA_REDUCTASE_2"/>
    <property type="match status" value="1"/>
</dbReference>
<dbReference type="PROSITE" id="PS01192">
    <property type="entry name" value="HMG_COA_REDUCTASE_3"/>
    <property type="match status" value="1"/>
</dbReference>
<dbReference type="PROSITE" id="PS50065">
    <property type="entry name" value="HMG_COA_REDUCTASE_4"/>
    <property type="match status" value="1"/>
</dbReference>
<dbReference type="PROSITE" id="PS50156">
    <property type="entry name" value="SSD"/>
    <property type="match status" value="1"/>
</dbReference>
<protein>
    <recommendedName>
        <fullName evidence="8">3-hydroxy-3-methylglutaryl-coenzyme A reductase</fullName>
        <shortName evidence="8">HMG-CoA reductasee</shortName>
        <ecNumber evidence="3">1.1.1.34</ecNumber>
    </recommendedName>
</protein>
<proteinExistence type="inferred from homology"/>
<accession>P0CT44</accession>
<accession>Q12577</accession>
<accession>Q12615</accession>
<name>HMDH_FUSFU</name>
<evidence type="ECO:0000250" key="1">
    <source>
        <dbReference type="UniProtKB" id="P04035"/>
    </source>
</evidence>
<evidence type="ECO:0000250" key="2">
    <source>
        <dbReference type="UniProtKB" id="P12684"/>
    </source>
</evidence>
<evidence type="ECO:0000250" key="3">
    <source>
        <dbReference type="UniProtKB" id="Q4WHZ1"/>
    </source>
</evidence>
<evidence type="ECO:0000255" key="4"/>
<evidence type="ECO:0000255" key="5">
    <source>
        <dbReference type="PROSITE-ProRule" id="PRU00199"/>
    </source>
</evidence>
<evidence type="ECO:0000255" key="6">
    <source>
        <dbReference type="PROSITE-ProRule" id="PRU10003"/>
    </source>
</evidence>
<evidence type="ECO:0000256" key="7">
    <source>
        <dbReference type="SAM" id="MobiDB-lite"/>
    </source>
</evidence>
<evidence type="ECO:0000303" key="8">
    <source>
    </source>
</evidence>
<evidence type="ECO:0000305" key="9"/>
<organism>
    <name type="scientific">Fusarium fujikuroi</name>
    <name type="common">Bakanae and foot rot disease fungus</name>
    <name type="synonym">Gibberella fujikuroi</name>
    <dbReference type="NCBI Taxonomy" id="5127"/>
    <lineage>
        <taxon>Eukaryota</taxon>
        <taxon>Fungi</taxon>
        <taxon>Dikarya</taxon>
        <taxon>Ascomycota</taxon>
        <taxon>Pezizomycotina</taxon>
        <taxon>Sordariomycetes</taxon>
        <taxon>Hypocreomycetidae</taxon>
        <taxon>Hypocreales</taxon>
        <taxon>Nectriaceae</taxon>
        <taxon>Fusarium</taxon>
        <taxon>Fusarium fujikuroi species complex</taxon>
    </lineage>
</organism>